<accession>Q6ZG25</accession>
<accession>A0A0P0XDU3</accession>
<accession>Q0J6X0</accession>
<comment type="function">
    <text evidence="1">The central subunit of the protein translocation channel SecYE. Consists of two halves formed by TMs 1-5 and 6-10. These two domains form a lateral gate at the front which open onto the bilayer between TMs 2 and 7, and are clamped together by SecE at the back. The channel is closed by both a pore ring composed of hydrophobic SecY resides and a short helix (helix 2A) on the extracellular side of the membrane which forms a plug (By similarity).</text>
</comment>
<comment type="subunit">
    <text evidence="1">Component of the plastid Sec protein translocase complex, which is composed of at least SECY and SECE.</text>
</comment>
<comment type="subcellular location">
    <subcellularLocation>
        <location evidence="1">Plastid</location>
        <location evidence="1">Chloroplast thylakoid membrane</location>
        <topology evidence="1">Multi-pass membrane protein</topology>
    </subcellularLocation>
</comment>
<comment type="similarity">
    <text evidence="4">Belongs to the SecY/SEC61-alpha family.</text>
</comment>
<protein>
    <recommendedName>
        <fullName>Preprotein translocase subunit SECY, chloroplastic</fullName>
    </recommendedName>
    <alternativeName>
        <fullName>CpSecY</fullName>
    </alternativeName>
</protein>
<organism>
    <name type="scientific">Oryza sativa subsp. japonica</name>
    <name type="common">Rice</name>
    <dbReference type="NCBI Taxonomy" id="39947"/>
    <lineage>
        <taxon>Eukaryota</taxon>
        <taxon>Viridiplantae</taxon>
        <taxon>Streptophyta</taxon>
        <taxon>Embryophyta</taxon>
        <taxon>Tracheophyta</taxon>
        <taxon>Spermatophyta</taxon>
        <taxon>Magnoliopsida</taxon>
        <taxon>Liliopsida</taxon>
        <taxon>Poales</taxon>
        <taxon>Poaceae</taxon>
        <taxon>BOP clade</taxon>
        <taxon>Oryzoideae</taxon>
        <taxon>Oryzeae</taxon>
        <taxon>Oryzinae</taxon>
        <taxon>Oryza</taxon>
        <taxon>Oryza sativa</taxon>
    </lineage>
</organism>
<proteinExistence type="evidence at transcript level"/>
<sequence length="556" mass="59530">MAAMATPQQCWLPTRARAPPPPPPRAPSSASPVSGAPASLRFRGRRAASASASAARRRRGASLPCSPRCALETAGPGFDPLGLYNDGPSRNDTQSPLSNFFGVLSPVFGSSSGGRKEKSYGRGAAAAIEDSSIDIGDFFKGPLPGKFLKLLGYLALSRLGIYIPLGGVNRDAFAGNLDQNSLLGTLDSFSGGGIGRLGICSLGIVPFINAQIVFQLLAQLYPKLQDLQKKEGEAGRKKVLQYTRYASVGFAIVQAIGQVLFLRPYVNDFSTEWVLTSVTLLTLGSVFTTFIGERISDLKLGNGTSLLIFTSIISYLPASFGRTVAQAFQDGNYVGLLTIILSFLFLVLGIVYVQEAERKIPLNYASRYSSRSGGLQRSAYLPFKVNSSGVMPIIFSTSSLALPGTLARFTGLEFLKKAAISLNPGGALYIPTNVLLIAFFNYYYTFLQLDPDDLSEQLKRQGASIPLVRPGKSTAAFIKTVLSNISVLGSAFLAVLAAGPSVVEQITHLTAFRGFAGTSVLILVGCATDTARKVQAEIISQKYKNIEFYDVNRFDQ</sequence>
<feature type="transit peptide" description="Chloroplast" evidence="2">
    <location>
        <begin position="1"/>
        <end position="68"/>
    </location>
</feature>
<feature type="chain" id="PRO_0000247496" description="Preprotein translocase subunit SECY, chloroplastic">
    <location>
        <begin position="69"/>
        <end position="556"/>
    </location>
</feature>
<feature type="transmembrane region" description="Helical" evidence="2">
    <location>
        <begin position="147"/>
        <end position="167"/>
    </location>
</feature>
<feature type="transmembrane region" description="Helical" evidence="2">
    <location>
        <begin position="197"/>
        <end position="217"/>
    </location>
</feature>
<feature type="transmembrane region" description="Helical" evidence="2">
    <location>
        <begin position="246"/>
        <end position="266"/>
    </location>
</feature>
<feature type="transmembrane region" description="Helical" evidence="2">
    <location>
        <begin position="272"/>
        <end position="292"/>
    </location>
</feature>
<feature type="transmembrane region" description="Helical" evidence="2">
    <location>
        <begin position="300"/>
        <end position="320"/>
    </location>
</feature>
<feature type="transmembrane region" description="Helical" evidence="2">
    <location>
        <begin position="333"/>
        <end position="353"/>
    </location>
</feature>
<feature type="transmembrane region" description="Helical" evidence="2">
    <location>
        <begin position="387"/>
        <end position="407"/>
    </location>
</feature>
<feature type="transmembrane region" description="Helical" evidence="2">
    <location>
        <begin position="420"/>
        <end position="440"/>
    </location>
</feature>
<feature type="transmembrane region" description="Helical" evidence="2">
    <location>
        <begin position="480"/>
        <end position="500"/>
    </location>
</feature>
<feature type="transmembrane region" description="Helical" evidence="2">
    <location>
        <begin position="506"/>
        <end position="526"/>
    </location>
</feature>
<feature type="region of interest" description="Disordered" evidence="3">
    <location>
        <begin position="1"/>
        <end position="59"/>
    </location>
</feature>
<feature type="compositionally biased region" description="Polar residues" evidence="3">
    <location>
        <begin position="1"/>
        <end position="11"/>
    </location>
</feature>
<feature type="compositionally biased region" description="Low complexity" evidence="3">
    <location>
        <begin position="27"/>
        <end position="54"/>
    </location>
</feature>
<feature type="sequence conflict" description="In Ref. 5; AK072225." evidence="4" ref="5">
    <original>S</original>
    <variation>Y</variation>
    <location>
        <position position="486"/>
    </location>
</feature>
<name>SECY_ORYSJ</name>
<keyword id="KW-0150">Chloroplast</keyword>
<keyword id="KW-0472">Membrane</keyword>
<keyword id="KW-0934">Plastid</keyword>
<keyword id="KW-0653">Protein transport</keyword>
<keyword id="KW-1185">Reference proteome</keyword>
<keyword id="KW-0793">Thylakoid</keyword>
<keyword id="KW-0809">Transit peptide</keyword>
<keyword id="KW-0811">Translocation</keyword>
<keyword id="KW-0812">Transmembrane</keyword>
<keyword id="KW-1133">Transmembrane helix</keyword>
<keyword id="KW-0813">Transport</keyword>
<gene>
    <name type="primary">SECY</name>
    <name evidence="5" type="ordered locus">Os08g0254500</name>
    <name evidence="4" type="ordered locus">LOC_Os08g15460</name>
    <name type="ORF">OJ1112_D12.8</name>
    <name type="ORF">OJ1575_B01.20</name>
    <name evidence="6" type="ORF">OsJ_26630</name>
</gene>
<reference key="1">
    <citation type="journal article" date="2005" name="Nature">
        <title>The map-based sequence of the rice genome.</title>
        <authorList>
            <consortium name="International rice genome sequencing project (IRGSP)"/>
        </authorList>
    </citation>
    <scope>NUCLEOTIDE SEQUENCE [LARGE SCALE GENOMIC DNA]</scope>
    <source>
        <strain>cv. Nipponbare</strain>
    </source>
</reference>
<reference key="2">
    <citation type="journal article" date="2008" name="Nucleic Acids Res.">
        <title>The rice annotation project database (RAP-DB): 2008 update.</title>
        <authorList>
            <consortium name="The rice annotation project (RAP)"/>
        </authorList>
    </citation>
    <scope>GENOME REANNOTATION</scope>
    <source>
        <strain>cv. Nipponbare</strain>
    </source>
</reference>
<reference key="3">
    <citation type="journal article" date="2013" name="Rice">
        <title>Improvement of the Oryza sativa Nipponbare reference genome using next generation sequence and optical map data.</title>
        <authorList>
            <person name="Kawahara Y."/>
            <person name="de la Bastide M."/>
            <person name="Hamilton J.P."/>
            <person name="Kanamori H."/>
            <person name="McCombie W.R."/>
            <person name="Ouyang S."/>
            <person name="Schwartz D.C."/>
            <person name="Tanaka T."/>
            <person name="Wu J."/>
            <person name="Zhou S."/>
            <person name="Childs K.L."/>
            <person name="Davidson R.M."/>
            <person name="Lin H."/>
            <person name="Quesada-Ocampo L."/>
            <person name="Vaillancourt B."/>
            <person name="Sakai H."/>
            <person name="Lee S.S."/>
            <person name="Kim J."/>
            <person name="Numa H."/>
            <person name="Itoh T."/>
            <person name="Buell C.R."/>
            <person name="Matsumoto T."/>
        </authorList>
    </citation>
    <scope>GENOME REANNOTATION</scope>
    <source>
        <strain>cv. Nipponbare</strain>
    </source>
</reference>
<reference key="4">
    <citation type="journal article" date="2005" name="PLoS Biol.">
        <title>The genomes of Oryza sativa: a history of duplications.</title>
        <authorList>
            <person name="Yu J."/>
            <person name="Wang J."/>
            <person name="Lin W."/>
            <person name="Li S."/>
            <person name="Li H."/>
            <person name="Zhou J."/>
            <person name="Ni P."/>
            <person name="Dong W."/>
            <person name="Hu S."/>
            <person name="Zeng C."/>
            <person name="Zhang J."/>
            <person name="Zhang Y."/>
            <person name="Li R."/>
            <person name="Xu Z."/>
            <person name="Li S."/>
            <person name="Li X."/>
            <person name="Zheng H."/>
            <person name="Cong L."/>
            <person name="Lin L."/>
            <person name="Yin J."/>
            <person name="Geng J."/>
            <person name="Li G."/>
            <person name="Shi J."/>
            <person name="Liu J."/>
            <person name="Lv H."/>
            <person name="Li J."/>
            <person name="Wang J."/>
            <person name="Deng Y."/>
            <person name="Ran L."/>
            <person name="Shi X."/>
            <person name="Wang X."/>
            <person name="Wu Q."/>
            <person name="Li C."/>
            <person name="Ren X."/>
            <person name="Wang J."/>
            <person name="Wang X."/>
            <person name="Li D."/>
            <person name="Liu D."/>
            <person name="Zhang X."/>
            <person name="Ji Z."/>
            <person name="Zhao W."/>
            <person name="Sun Y."/>
            <person name="Zhang Z."/>
            <person name="Bao J."/>
            <person name="Han Y."/>
            <person name="Dong L."/>
            <person name="Ji J."/>
            <person name="Chen P."/>
            <person name="Wu S."/>
            <person name="Liu J."/>
            <person name="Xiao Y."/>
            <person name="Bu D."/>
            <person name="Tan J."/>
            <person name="Yang L."/>
            <person name="Ye C."/>
            <person name="Zhang J."/>
            <person name="Xu J."/>
            <person name="Zhou Y."/>
            <person name="Yu Y."/>
            <person name="Zhang B."/>
            <person name="Zhuang S."/>
            <person name="Wei H."/>
            <person name="Liu B."/>
            <person name="Lei M."/>
            <person name="Yu H."/>
            <person name="Li Y."/>
            <person name="Xu H."/>
            <person name="Wei S."/>
            <person name="He X."/>
            <person name="Fang L."/>
            <person name="Zhang Z."/>
            <person name="Zhang Y."/>
            <person name="Huang X."/>
            <person name="Su Z."/>
            <person name="Tong W."/>
            <person name="Li J."/>
            <person name="Tong Z."/>
            <person name="Li S."/>
            <person name="Ye J."/>
            <person name="Wang L."/>
            <person name="Fang L."/>
            <person name="Lei T."/>
            <person name="Chen C.-S."/>
            <person name="Chen H.-C."/>
            <person name="Xu Z."/>
            <person name="Li H."/>
            <person name="Huang H."/>
            <person name="Zhang F."/>
            <person name="Xu H."/>
            <person name="Li N."/>
            <person name="Zhao C."/>
            <person name="Li S."/>
            <person name="Dong L."/>
            <person name="Huang Y."/>
            <person name="Li L."/>
            <person name="Xi Y."/>
            <person name="Qi Q."/>
            <person name="Li W."/>
            <person name="Zhang B."/>
            <person name="Hu W."/>
            <person name="Zhang Y."/>
            <person name="Tian X."/>
            <person name="Jiao Y."/>
            <person name="Liang X."/>
            <person name="Jin J."/>
            <person name="Gao L."/>
            <person name="Zheng W."/>
            <person name="Hao B."/>
            <person name="Liu S.-M."/>
            <person name="Wang W."/>
            <person name="Yuan L."/>
            <person name="Cao M."/>
            <person name="McDermott J."/>
            <person name="Samudrala R."/>
            <person name="Wang J."/>
            <person name="Wong G.K.-S."/>
            <person name="Yang H."/>
        </authorList>
    </citation>
    <scope>NUCLEOTIDE SEQUENCE [LARGE SCALE GENOMIC DNA]</scope>
    <source>
        <strain>cv. Nipponbare</strain>
    </source>
</reference>
<reference key="5">
    <citation type="journal article" date="2003" name="Science">
        <title>Collection, mapping, and annotation of over 28,000 cDNA clones from japonica rice.</title>
        <authorList>
            <consortium name="The rice full-length cDNA consortium"/>
        </authorList>
    </citation>
    <scope>NUCLEOTIDE SEQUENCE [LARGE SCALE MRNA]</scope>
    <source>
        <strain>cv. Nipponbare</strain>
    </source>
</reference>
<evidence type="ECO:0000250" key="1"/>
<evidence type="ECO:0000255" key="2"/>
<evidence type="ECO:0000256" key="3">
    <source>
        <dbReference type="SAM" id="MobiDB-lite"/>
    </source>
</evidence>
<evidence type="ECO:0000305" key="4"/>
<evidence type="ECO:0000312" key="5">
    <source>
        <dbReference type="EMBL" id="BAF23295.1"/>
    </source>
</evidence>
<evidence type="ECO:0000312" key="6">
    <source>
        <dbReference type="EMBL" id="EAZ42069.1"/>
    </source>
</evidence>
<dbReference type="EMBL" id="AP004013">
    <property type="protein sequence ID" value="BAC98517.1"/>
    <property type="molecule type" value="Genomic_DNA"/>
</dbReference>
<dbReference type="EMBL" id="AP004155">
    <property type="protein sequence ID" value="BAC98535.1"/>
    <property type="molecule type" value="Genomic_DNA"/>
</dbReference>
<dbReference type="EMBL" id="AP008214">
    <property type="protein sequence ID" value="BAF23295.1"/>
    <property type="molecule type" value="Genomic_DNA"/>
</dbReference>
<dbReference type="EMBL" id="AP014964">
    <property type="protein sequence ID" value="BAT04569.1"/>
    <property type="molecule type" value="Genomic_DNA"/>
</dbReference>
<dbReference type="EMBL" id="CM000145">
    <property type="protein sequence ID" value="EAZ42069.1"/>
    <property type="molecule type" value="Genomic_DNA"/>
</dbReference>
<dbReference type="EMBL" id="AK072225">
    <property type="status" value="NOT_ANNOTATED_CDS"/>
    <property type="molecule type" value="mRNA"/>
</dbReference>
<dbReference type="RefSeq" id="XP_015650895.1">
    <property type="nucleotide sequence ID" value="XM_015795409.1"/>
</dbReference>
<dbReference type="SMR" id="Q6ZG25"/>
<dbReference type="FunCoup" id="Q6ZG25">
    <property type="interactions" value="769"/>
</dbReference>
<dbReference type="STRING" id="39947.Q6ZG25"/>
<dbReference type="PaxDb" id="39947-Q6ZG25"/>
<dbReference type="EnsemblPlants" id="Os08t0254500-01">
    <property type="protein sequence ID" value="Os08t0254500-01"/>
    <property type="gene ID" value="Os08g0254500"/>
</dbReference>
<dbReference type="EnsemblPlants" id="Os08t0254500-02">
    <property type="protein sequence ID" value="Os08t0254500-02"/>
    <property type="gene ID" value="Os08g0254500"/>
</dbReference>
<dbReference type="Gramene" id="Os08t0254500-01">
    <property type="protein sequence ID" value="Os08t0254500-01"/>
    <property type="gene ID" value="Os08g0254500"/>
</dbReference>
<dbReference type="Gramene" id="Os08t0254500-02">
    <property type="protein sequence ID" value="Os08t0254500-02"/>
    <property type="gene ID" value="Os08g0254500"/>
</dbReference>
<dbReference type="KEGG" id="dosa:Os08g0254500"/>
<dbReference type="eggNOG" id="ENOG502QSNV">
    <property type="taxonomic scope" value="Eukaryota"/>
</dbReference>
<dbReference type="HOGENOM" id="CLU_030313_0_0_1"/>
<dbReference type="InParanoid" id="Q6ZG25"/>
<dbReference type="OMA" id="FAMWLGE"/>
<dbReference type="OrthoDB" id="361383at2759"/>
<dbReference type="Proteomes" id="UP000000763">
    <property type="component" value="Chromosome 8"/>
</dbReference>
<dbReference type="Proteomes" id="UP000007752">
    <property type="component" value="Chromosome 8"/>
</dbReference>
<dbReference type="Proteomes" id="UP000059680">
    <property type="component" value="Chromosome 8"/>
</dbReference>
<dbReference type="ExpressionAtlas" id="Q6ZG25">
    <property type="expression patterns" value="baseline and differential"/>
</dbReference>
<dbReference type="GO" id="GO:0009535">
    <property type="term" value="C:chloroplast thylakoid membrane"/>
    <property type="evidence" value="ECO:0000318"/>
    <property type="project" value="GO_Central"/>
</dbReference>
<dbReference type="GO" id="GO:0008320">
    <property type="term" value="F:protein transmembrane transporter activity"/>
    <property type="evidence" value="ECO:0000318"/>
    <property type="project" value="GO_Central"/>
</dbReference>
<dbReference type="GO" id="GO:0005048">
    <property type="term" value="F:signal sequence binding"/>
    <property type="evidence" value="ECO:0000318"/>
    <property type="project" value="GO_Central"/>
</dbReference>
<dbReference type="GO" id="GO:0006616">
    <property type="term" value="P:SRP-dependent cotranslational protein targeting to membrane, translocation"/>
    <property type="evidence" value="ECO:0000318"/>
    <property type="project" value="GO_Central"/>
</dbReference>
<dbReference type="FunFam" id="1.10.3370.10:FF:000003">
    <property type="entry name" value="Preprotein translocase subunit SECY, chloroplastic"/>
    <property type="match status" value="1"/>
</dbReference>
<dbReference type="Gene3D" id="1.10.3370.10">
    <property type="entry name" value="SecY subunit domain"/>
    <property type="match status" value="1"/>
</dbReference>
<dbReference type="HAMAP" id="MF_01465">
    <property type="entry name" value="SecY"/>
    <property type="match status" value="1"/>
</dbReference>
<dbReference type="InterPro" id="IPR026593">
    <property type="entry name" value="SecY"/>
</dbReference>
<dbReference type="InterPro" id="IPR002208">
    <property type="entry name" value="SecY/SEC61-alpha"/>
</dbReference>
<dbReference type="InterPro" id="IPR030659">
    <property type="entry name" value="SecY_CS"/>
</dbReference>
<dbReference type="InterPro" id="IPR023201">
    <property type="entry name" value="SecY_dom_sf"/>
</dbReference>
<dbReference type="NCBIfam" id="TIGR00967">
    <property type="entry name" value="3a0501s007"/>
    <property type="match status" value="1"/>
</dbReference>
<dbReference type="PANTHER" id="PTHR10906">
    <property type="entry name" value="SECY/SEC61-ALPHA FAMILY MEMBER"/>
    <property type="match status" value="1"/>
</dbReference>
<dbReference type="Pfam" id="PF00344">
    <property type="entry name" value="SecY"/>
    <property type="match status" value="1"/>
</dbReference>
<dbReference type="PRINTS" id="PR00303">
    <property type="entry name" value="SECYTRNLCASE"/>
</dbReference>
<dbReference type="SUPFAM" id="SSF103491">
    <property type="entry name" value="Preprotein translocase SecY subunit"/>
    <property type="match status" value="1"/>
</dbReference>
<dbReference type="PROSITE" id="PS00755">
    <property type="entry name" value="SECY_1"/>
    <property type="match status" value="1"/>
</dbReference>
<dbReference type="PROSITE" id="PS00756">
    <property type="entry name" value="SECY_2"/>
    <property type="match status" value="1"/>
</dbReference>